<gene>
    <name type="primary">insE5</name>
    <name type="ordered locus">b2088</name>
    <name type="ordered locus">JW5341</name>
</gene>
<organism>
    <name type="scientific">Escherichia coli (strain K12)</name>
    <dbReference type="NCBI Taxonomy" id="83333"/>
    <lineage>
        <taxon>Bacteria</taxon>
        <taxon>Pseudomonadati</taxon>
        <taxon>Pseudomonadota</taxon>
        <taxon>Gammaproteobacteria</taxon>
        <taxon>Enterobacterales</taxon>
        <taxon>Enterobacteriaceae</taxon>
        <taxon>Escherichia</taxon>
    </lineage>
</organism>
<feature type="chain" id="PRO_0000393746" description="Transposase InsE for insertion sequence IS3E">
    <location>
        <begin position="1"/>
        <end position="99"/>
    </location>
</feature>
<feature type="region of interest" description="Disordered" evidence="1">
    <location>
        <begin position="1"/>
        <end position="21"/>
    </location>
</feature>
<sequence length="99" mass="11543">MTKTVSTSKKPRKQHSPEFRSEALKLAERIGVTAAARELSLYESQLYNWRSKQQNQQTSSERELEMSTEIARLKRQLAERDEELAILQKAATYFAKRLK</sequence>
<proteinExistence type="inferred from homology"/>
<comment type="function">
    <text>Involved in the transposition of the insertion sequence IS3.</text>
</comment>
<comment type="similarity">
    <text evidence="2">Belongs to the transposase 8 family.</text>
</comment>
<comment type="sequence caution" evidence="2">
    <conflict type="erroneous initiation">
        <sequence resource="EMBL-CDS" id="BAE76583"/>
    </conflict>
    <text>Extended N-terminus.</text>
</comment>
<keyword id="KW-0233">DNA recombination</keyword>
<keyword id="KW-0238">DNA-binding</keyword>
<keyword id="KW-1185">Reference proteome</keyword>
<keyword id="KW-0814">Transposable element</keyword>
<keyword id="KW-0815">Transposition</keyword>
<evidence type="ECO:0000256" key="1">
    <source>
        <dbReference type="SAM" id="MobiDB-lite"/>
    </source>
</evidence>
<evidence type="ECO:0000305" key="2"/>
<dbReference type="EMBL" id="U00096">
    <property type="protein sequence ID" value="AAC75149.2"/>
    <property type="molecule type" value="Genomic_DNA"/>
</dbReference>
<dbReference type="EMBL" id="AP009048">
    <property type="protein sequence ID" value="BAE76583.1"/>
    <property type="status" value="ALT_INIT"/>
    <property type="molecule type" value="Genomic_DNA"/>
</dbReference>
<dbReference type="PIR" id="A64845">
    <property type="entry name" value="A64845"/>
</dbReference>
<dbReference type="RefSeq" id="NP_061380.1">
    <property type="nucleotide sequence ID" value="NC_002483.1"/>
</dbReference>
<dbReference type="RefSeq" id="NP_061395.1">
    <property type="nucleotide sequence ID" value="NC_002483.1"/>
</dbReference>
<dbReference type="RefSeq" id="NP_416592.2">
    <property type="nucleotide sequence ID" value="NC_000913.3"/>
</dbReference>
<dbReference type="SMR" id="P0CF70"/>
<dbReference type="DIP" id="DIP-60621N"/>
<dbReference type="FunCoup" id="P0CF70">
    <property type="interactions" value="40"/>
</dbReference>
<dbReference type="EnsemblBacteria" id="AAC75149">
    <property type="protein sequence ID" value="AAC75149"/>
    <property type="gene ID" value="b2088"/>
</dbReference>
<dbReference type="GeneID" id="946616"/>
<dbReference type="KEGG" id="ecj:JW5341"/>
<dbReference type="KEGG" id="eco:b0298"/>
<dbReference type="KEGG" id="eco:b0373"/>
<dbReference type="KEGG" id="eco:b0540"/>
<dbReference type="KEGG" id="eco:b1027"/>
<dbReference type="KEGG" id="eco:b2088"/>
<dbReference type="KEGG" id="ecoc:C3026_01465"/>
<dbReference type="KEGG" id="ecoc:C3026_02655"/>
<dbReference type="KEGG" id="ecoc:C3026_06255"/>
<dbReference type="KEGG" id="ecoc:C3026_11725"/>
<dbReference type="KEGG" id="ecoc:C3026_24095"/>
<dbReference type="KEGG" id="ecoc:C3026_24185"/>
<dbReference type="KEGG" id="ecoc:C3026_24640"/>
<dbReference type="PATRIC" id="fig|511145.12.peg.1067"/>
<dbReference type="EchoBASE" id="EB4714"/>
<dbReference type="HOGENOM" id="CLU_027402_18_0_6"/>
<dbReference type="InParanoid" id="P0CF70"/>
<dbReference type="OMA" id="LHESQIY"/>
<dbReference type="PhylomeDB" id="P0CF70"/>
<dbReference type="BioCyc" id="EcoCyc:MONOMER0-4245"/>
<dbReference type="PRO" id="PR:P0CF70"/>
<dbReference type="Proteomes" id="UP000000625">
    <property type="component" value="Chromosome"/>
</dbReference>
<dbReference type="GO" id="GO:0003677">
    <property type="term" value="F:DNA binding"/>
    <property type="evidence" value="ECO:0007669"/>
    <property type="project" value="UniProtKB-KW"/>
</dbReference>
<dbReference type="GO" id="GO:0004803">
    <property type="term" value="F:transposase activity"/>
    <property type="evidence" value="ECO:0007669"/>
    <property type="project" value="InterPro"/>
</dbReference>
<dbReference type="GO" id="GO:0006313">
    <property type="term" value="P:DNA transposition"/>
    <property type="evidence" value="ECO:0007669"/>
    <property type="project" value="InterPro"/>
</dbReference>
<dbReference type="InterPro" id="IPR009057">
    <property type="entry name" value="Homeodomain-like_sf"/>
</dbReference>
<dbReference type="InterPro" id="IPR051839">
    <property type="entry name" value="RD_transcriptional_regulator"/>
</dbReference>
<dbReference type="InterPro" id="IPR002514">
    <property type="entry name" value="Transposase_8"/>
</dbReference>
<dbReference type="PANTHER" id="PTHR33215">
    <property type="entry name" value="PROTEIN DISTAL ANTENNA"/>
    <property type="match status" value="1"/>
</dbReference>
<dbReference type="PANTHER" id="PTHR33215:SF6">
    <property type="entry name" value="TRANSPOSASE INSE FOR INSERTION SEQUENCE IS3A-RELATED"/>
    <property type="match status" value="1"/>
</dbReference>
<dbReference type="Pfam" id="PF01527">
    <property type="entry name" value="HTH_Tnp_1"/>
    <property type="match status" value="1"/>
</dbReference>
<dbReference type="SUPFAM" id="SSF46689">
    <property type="entry name" value="Homeodomain-like"/>
    <property type="match status" value="1"/>
</dbReference>
<reference key="1">
    <citation type="journal article" date="1997" name="Science">
        <title>The complete genome sequence of Escherichia coli K-12.</title>
        <authorList>
            <person name="Blattner F.R."/>
            <person name="Plunkett G. III"/>
            <person name="Bloch C.A."/>
            <person name="Perna N.T."/>
            <person name="Burland V."/>
            <person name="Riley M."/>
            <person name="Collado-Vides J."/>
            <person name="Glasner J.D."/>
            <person name="Rode C.K."/>
            <person name="Mayhew G.F."/>
            <person name="Gregor J."/>
            <person name="Davis N.W."/>
            <person name="Kirkpatrick H.A."/>
            <person name="Goeden M.A."/>
            <person name="Rose D.J."/>
            <person name="Mau B."/>
            <person name="Shao Y."/>
        </authorList>
    </citation>
    <scope>NUCLEOTIDE SEQUENCE [LARGE SCALE GENOMIC DNA]</scope>
    <source>
        <strain>K12 / MG1655 / ATCC 47076</strain>
    </source>
</reference>
<reference key="2">
    <citation type="journal article" date="2006" name="Mol. Syst. Biol.">
        <title>Highly accurate genome sequences of Escherichia coli K-12 strains MG1655 and W3110.</title>
        <authorList>
            <person name="Hayashi K."/>
            <person name="Morooka N."/>
            <person name="Yamamoto Y."/>
            <person name="Fujita K."/>
            <person name="Isono K."/>
            <person name="Choi S."/>
            <person name="Ohtsubo E."/>
            <person name="Baba T."/>
            <person name="Wanner B.L."/>
            <person name="Mori H."/>
            <person name="Horiuchi T."/>
        </authorList>
    </citation>
    <scope>NUCLEOTIDE SEQUENCE [LARGE SCALE GENOMIC DNA]</scope>
    <source>
        <strain>K12 / W3110 / ATCC 27325 / DSM 5911</strain>
    </source>
</reference>
<name>INSE5_ECOLI</name>
<accession>P0CF70</accession>
<accession>P0ADH3</accession>
<accession>P77681</accession>
<accession>Q2MCC3</accession>
<accession>Q9S136</accession>
<protein>
    <recommendedName>
        <fullName>Transposase InsE for insertion sequence IS3E</fullName>
    </recommendedName>
</protein>